<accession>Q2YYL2</accession>
<evidence type="ECO:0000255" key="1">
    <source>
        <dbReference type="HAMAP-Rule" id="MF_01365"/>
    </source>
</evidence>
<evidence type="ECO:0000305" key="2"/>
<proteinExistence type="evidence at protein level"/>
<dbReference type="EMBL" id="AJ938182">
    <property type="protein sequence ID" value="CAI81796.1"/>
    <property type="molecule type" value="Genomic_DNA"/>
</dbReference>
<dbReference type="RefSeq" id="WP_000091975.1">
    <property type="nucleotide sequence ID" value="NC_007622.1"/>
</dbReference>
<dbReference type="PDB" id="6FXC">
    <property type="method" value="EM"/>
    <property type="resolution" value="6.76 A"/>
    <property type="chains" value="AG/BG=2-176"/>
</dbReference>
<dbReference type="PDBsum" id="6FXC"/>
<dbReference type="EMDB" id="EMD-0243"/>
<dbReference type="EMDB" id="EMD-3637"/>
<dbReference type="SMR" id="Q2YYL2"/>
<dbReference type="KEGG" id="sab:SAB2107c"/>
<dbReference type="HOGENOM" id="CLU_065464_1_2_9"/>
<dbReference type="GO" id="GO:0022625">
    <property type="term" value="C:cytosolic large ribosomal subunit"/>
    <property type="evidence" value="ECO:0007669"/>
    <property type="project" value="TreeGrafter"/>
</dbReference>
<dbReference type="GO" id="GO:0019843">
    <property type="term" value="F:rRNA binding"/>
    <property type="evidence" value="ECO:0007669"/>
    <property type="project" value="UniProtKB-UniRule"/>
</dbReference>
<dbReference type="GO" id="GO:0003735">
    <property type="term" value="F:structural constituent of ribosome"/>
    <property type="evidence" value="ECO:0007669"/>
    <property type="project" value="InterPro"/>
</dbReference>
<dbReference type="GO" id="GO:0002181">
    <property type="term" value="P:cytoplasmic translation"/>
    <property type="evidence" value="ECO:0007669"/>
    <property type="project" value="TreeGrafter"/>
</dbReference>
<dbReference type="FunFam" id="3.90.930.12:FF:000001">
    <property type="entry name" value="50S ribosomal protein L6"/>
    <property type="match status" value="1"/>
</dbReference>
<dbReference type="FunFam" id="3.90.930.12:FF:000002">
    <property type="entry name" value="50S ribosomal protein L6"/>
    <property type="match status" value="1"/>
</dbReference>
<dbReference type="Gene3D" id="3.90.930.12">
    <property type="entry name" value="Ribosomal protein L6, alpha-beta domain"/>
    <property type="match status" value="2"/>
</dbReference>
<dbReference type="HAMAP" id="MF_01365_B">
    <property type="entry name" value="Ribosomal_uL6_B"/>
    <property type="match status" value="1"/>
</dbReference>
<dbReference type="InterPro" id="IPR000702">
    <property type="entry name" value="Ribosomal_uL6-like"/>
</dbReference>
<dbReference type="InterPro" id="IPR036789">
    <property type="entry name" value="Ribosomal_uL6-like_a/b-dom_sf"/>
</dbReference>
<dbReference type="InterPro" id="IPR020040">
    <property type="entry name" value="Ribosomal_uL6_a/b-dom"/>
</dbReference>
<dbReference type="InterPro" id="IPR019906">
    <property type="entry name" value="Ribosomal_uL6_bac-type"/>
</dbReference>
<dbReference type="InterPro" id="IPR002358">
    <property type="entry name" value="Ribosomal_uL6_CS"/>
</dbReference>
<dbReference type="NCBIfam" id="TIGR03654">
    <property type="entry name" value="L6_bact"/>
    <property type="match status" value="1"/>
</dbReference>
<dbReference type="PANTHER" id="PTHR11655">
    <property type="entry name" value="60S/50S RIBOSOMAL PROTEIN L6/L9"/>
    <property type="match status" value="1"/>
</dbReference>
<dbReference type="PANTHER" id="PTHR11655:SF14">
    <property type="entry name" value="LARGE RIBOSOMAL SUBUNIT PROTEIN UL6M"/>
    <property type="match status" value="1"/>
</dbReference>
<dbReference type="Pfam" id="PF00347">
    <property type="entry name" value="Ribosomal_L6"/>
    <property type="match status" value="2"/>
</dbReference>
<dbReference type="PIRSF" id="PIRSF002162">
    <property type="entry name" value="Ribosomal_L6"/>
    <property type="match status" value="1"/>
</dbReference>
<dbReference type="PRINTS" id="PR00059">
    <property type="entry name" value="RIBOSOMALL6"/>
</dbReference>
<dbReference type="SUPFAM" id="SSF56053">
    <property type="entry name" value="Ribosomal protein L6"/>
    <property type="match status" value="2"/>
</dbReference>
<dbReference type="PROSITE" id="PS00525">
    <property type="entry name" value="RIBOSOMAL_L6_1"/>
    <property type="match status" value="1"/>
</dbReference>
<reference key="1">
    <citation type="journal article" date="2007" name="PLoS ONE">
        <title>Molecular correlates of host specialization in Staphylococcus aureus.</title>
        <authorList>
            <person name="Herron-Olson L."/>
            <person name="Fitzgerald J.R."/>
            <person name="Musser J.M."/>
            <person name="Kapur V."/>
        </authorList>
    </citation>
    <scope>NUCLEOTIDE SEQUENCE [LARGE SCALE GENOMIC DNA]</scope>
    <source>
        <strain>bovine RF122 / ET3-1</strain>
    </source>
</reference>
<feature type="chain" id="PRO_0000260938" description="Large ribosomal subunit protein uL6">
    <location>
        <begin position="1"/>
        <end position="178"/>
    </location>
</feature>
<gene>
    <name evidence="1" type="primary">rplF</name>
    <name type="ordered locus">SAB2107c</name>
</gene>
<protein>
    <recommendedName>
        <fullName evidence="1">Large ribosomal subunit protein uL6</fullName>
    </recommendedName>
    <alternativeName>
        <fullName evidence="2">50S ribosomal protein L6</fullName>
    </alternativeName>
</protein>
<keyword id="KW-0002">3D-structure</keyword>
<keyword id="KW-0687">Ribonucleoprotein</keyword>
<keyword id="KW-0689">Ribosomal protein</keyword>
<keyword id="KW-0694">RNA-binding</keyword>
<keyword id="KW-0699">rRNA-binding</keyword>
<name>RL6_STAAB</name>
<sequence length="178" mass="19787">MSRVGKKIIDIPSDVTVTFDGNHVTVKGPKGELSRTLNERMTFKQEENTIEVVRPSDSKEDRTNHGTTRALLNNMVQGVSQGYVKVLELVGVGYRAQMQGKDLILNVGYSHPVEIKAEENITFSVEKNTVVKVEGISKEQVGALASNIRSVRPPEPYKGKGIRYQGEYVRRKEGKTGK</sequence>
<comment type="function">
    <text evidence="1">This protein binds to the 23S rRNA, and is important in its secondary structure. It is located near the subunit interface in the base of the L7/L12 stalk, and near the tRNA binding site of the peptidyltransferase center.</text>
</comment>
<comment type="subunit">
    <text evidence="1">Part of the 50S ribosomal subunit.</text>
</comment>
<comment type="similarity">
    <text evidence="1">Belongs to the universal ribosomal protein uL6 family.</text>
</comment>
<organism>
    <name type="scientific">Staphylococcus aureus (strain bovine RF122 / ET3-1)</name>
    <dbReference type="NCBI Taxonomy" id="273036"/>
    <lineage>
        <taxon>Bacteria</taxon>
        <taxon>Bacillati</taxon>
        <taxon>Bacillota</taxon>
        <taxon>Bacilli</taxon>
        <taxon>Bacillales</taxon>
        <taxon>Staphylococcaceae</taxon>
        <taxon>Staphylococcus</taxon>
    </lineage>
</organism>